<dbReference type="EMBL" id="CP001089">
    <property type="protein sequence ID" value="ACD96421.1"/>
    <property type="molecule type" value="Genomic_DNA"/>
</dbReference>
<dbReference type="RefSeq" id="WP_012470750.1">
    <property type="nucleotide sequence ID" value="NC_010814.1"/>
</dbReference>
<dbReference type="SMR" id="B3E716"/>
<dbReference type="STRING" id="398767.Glov_2708"/>
<dbReference type="KEGG" id="glo:Glov_2708"/>
<dbReference type="eggNOG" id="COG0052">
    <property type="taxonomic scope" value="Bacteria"/>
</dbReference>
<dbReference type="HOGENOM" id="CLU_040318_1_2_7"/>
<dbReference type="OrthoDB" id="9808036at2"/>
<dbReference type="Proteomes" id="UP000002420">
    <property type="component" value="Chromosome"/>
</dbReference>
<dbReference type="GO" id="GO:0022627">
    <property type="term" value="C:cytosolic small ribosomal subunit"/>
    <property type="evidence" value="ECO:0007669"/>
    <property type="project" value="TreeGrafter"/>
</dbReference>
<dbReference type="GO" id="GO:0003735">
    <property type="term" value="F:structural constituent of ribosome"/>
    <property type="evidence" value="ECO:0007669"/>
    <property type="project" value="InterPro"/>
</dbReference>
<dbReference type="GO" id="GO:0006412">
    <property type="term" value="P:translation"/>
    <property type="evidence" value="ECO:0007669"/>
    <property type="project" value="UniProtKB-UniRule"/>
</dbReference>
<dbReference type="CDD" id="cd01425">
    <property type="entry name" value="RPS2"/>
    <property type="match status" value="1"/>
</dbReference>
<dbReference type="FunFam" id="1.10.287.610:FF:000001">
    <property type="entry name" value="30S ribosomal protein S2"/>
    <property type="match status" value="1"/>
</dbReference>
<dbReference type="Gene3D" id="3.40.50.10490">
    <property type="entry name" value="Glucose-6-phosphate isomerase like protein, domain 1"/>
    <property type="match status" value="1"/>
</dbReference>
<dbReference type="Gene3D" id="1.10.287.610">
    <property type="entry name" value="Helix hairpin bin"/>
    <property type="match status" value="1"/>
</dbReference>
<dbReference type="HAMAP" id="MF_00291_B">
    <property type="entry name" value="Ribosomal_uS2_B"/>
    <property type="match status" value="1"/>
</dbReference>
<dbReference type="InterPro" id="IPR001865">
    <property type="entry name" value="Ribosomal_uS2"/>
</dbReference>
<dbReference type="InterPro" id="IPR005706">
    <property type="entry name" value="Ribosomal_uS2_bac/mit/plastid"/>
</dbReference>
<dbReference type="InterPro" id="IPR018130">
    <property type="entry name" value="Ribosomal_uS2_CS"/>
</dbReference>
<dbReference type="InterPro" id="IPR023591">
    <property type="entry name" value="Ribosomal_uS2_flav_dom_sf"/>
</dbReference>
<dbReference type="NCBIfam" id="TIGR01011">
    <property type="entry name" value="rpsB_bact"/>
    <property type="match status" value="1"/>
</dbReference>
<dbReference type="PANTHER" id="PTHR12534">
    <property type="entry name" value="30S RIBOSOMAL PROTEIN S2 PROKARYOTIC AND ORGANELLAR"/>
    <property type="match status" value="1"/>
</dbReference>
<dbReference type="PANTHER" id="PTHR12534:SF0">
    <property type="entry name" value="SMALL RIBOSOMAL SUBUNIT PROTEIN US2M"/>
    <property type="match status" value="1"/>
</dbReference>
<dbReference type="Pfam" id="PF00318">
    <property type="entry name" value="Ribosomal_S2"/>
    <property type="match status" value="1"/>
</dbReference>
<dbReference type="PRINTS" id="PR00395">
    <property type="entry name" value="RIBOSOMALS2"/>
</dbReference>
<dbReference type="SUPFAM" id="SSF52313">
    <property type="entry name" value="Ribosomal protein S2"/>
    <property type="match status" value="1"/>
</dbReference>
<dbReference type="PROSITE" id="PS00962">
    <property type="entry name" value="RIBOSOMAL_S2_1"/>
    <property type="match status" value="1"/>
</dbReference>
<dbReference type="PROSITE" id="PS00963">
    <property type="entry name" value="RIBOSOMAL_S2_2"/>
    <property type="match status" value="1"/>
</dbReference>
<reference key="1">
    <citation type="submission" date="2008-05" db="EMBL/GenBank/DDBJ databases">
        <title>Complete sequence of chromosome of Geobacter lovleyi SZ.</title>
        <authorList>
            <consortium name="US DOE Joint Genome Institute"/>
            <person name="Lucas S."/>
            <person name="Copeland A."/>
            <person name="Lapidus A."/>
            <person name="Glavina del Rio T."/>
            <person name="Dalin E."/>
            <person name="Tice H."/>
            <person name="Bruce D."/>
            <person name="Goodwin L."/>
            <person name="Pitluck S."/>
            <person name="Chertkov O."/>
            <person name="Meincke L."/>
            <person name="Brettin T."/>
            <person name="Detter J.C."/>
            <person name="Han C."/>
            <person name="Tapia R."/>
            <person name="Kuske C.R."/>
            <person name="Schmutz J."/>
            <person name="Larimer F."/>
            <person name="Land M."/>
            <person name="Hauser L."/>
            <person name="Kyrpides N."/>
            <person name="Mikhailova N."/>
            <person name="Sung Y."/>
            <person name="Fletcher K.E."/>
            <person name="Ritalahti K.M."/>
            <person name="Loeffler F.E."/>
            <person name="Richardson P."/>
        </authorList>
    </citation>
    <scope>NUCLEOTIDE SEQUENCE [LARGE SCALE GENOMIC DNA]</scope>
    <source>
        <strain>ATCC BAA-1151 / DSM 17278 / SZ</strain>
    </source>
</reference>
<protein>
    <recommendedName>
        <fullName evidence="1">Small ribosomal subunit protein uS2</fullName>
    </recommendedName>
    <alternativeName>
        <fullName evidence="2">30S ribosomal protein S2</fullName>
    </alternativeName>
</protein>
<organism>
    <name type="scientific">Trichlorobacter lovleyi (strain ATCC BAA-1151 / DSM 17278 / SZ)</name>
    <name type="common">Geobacter lovleyi</name>
    <dbReference type="NCBI Taxonomy" id="398767"/>
    <lineage>
        <taxon>Bacteria</taxon>
        <taxon>Pseudomonadati</taxon>
        <taxon>Thermodesulfobacteriota</taxon>
        <taxon>Desulfuromonadia</taxon>
        <taxon>Geobacterales</taxon>
        <taxon>Geobacteraceae</taxon>
        <taxon>Trichlorobacter</taxon>
    </lineage>
</organism>
<feature type="chain" id="PRO_1000115024" description="Small ribosomal subunit protein uS2">
    <location>
        <begin position="1"/>
        <end position="257"/>
    </location>
</feature>
<keyword id="KW-1185">Reference proteome</keyword>
<keyword id="KW-0687">Ribonucleoprotein</keyword>
<keyword id="KW-0689">Ribosomal protein</keyword>
<gene>
    <name evidence="1" type="primary">rpsB</name>
    <name type="ordered locus">Glov_2708</name>
</gene>
<name>RS2_TRIL1</name>
<proteinExistence type="inferred from homology"/>
<evidence type="ECO:0000255" key="1">
    <source>
        <dbReference type="HAMAP-Rule" id="MF_00291"/>
    </source>
</evidence>
<evidence type="ECO:0000305" key="2"/>
<accession>B3E716</accession>
<comment type="similarity">
    <text evidence="1">Belongs to the universal ribosomal protein uS2 family.</text>
</comment>
<sequence length="257" mass="28525">MSSISMKELLEAGVHFGHQTKRWNPKMKPYIFGARNGIYIIDLQKTVRYFKSAYNFVKESAEQGNTVLFVGTKKQAQDSVAEEATRCGQYYVNQRWLGGMLTNFSTVKQSIERLKKLDAMFEDGTIEAYTKKEALKMDKEREKLEKVLGGIKNMNKLPGMMFVIDPKNEEIAVQEAKKLGIPVVAIVDTNCDPDMIDHVIPGNDDAIRAIRLLTAKIADAVQEGADARNVVLQSGAEGADDLEEALADEVACEASAD</sequence>